<feature type="chain" id="PRO_0000174852" description="Co-chaperonin GroES">
    <location>
        <begin position="1"/>
        <end position="94"/>
    </location>
</feature>
<name>CH10_STRA3</name>
<evidence type="ECO:0000255" key="1">
    <source>
        <dbReference type="HAMAP-Rule" id="MF_00580"/>
    </source>
</evidence>
<proteinExistence type="inferred from homology"/>
<reference key="1">
    <citation type="journal article" date="2002" name="Mol. Microbiol.">
        <title>Genome sequence of Streptococcus agalactiae, a pathogen causing invasive neonatal disease.</title>
        <authorList>
            <person name="Glaser P."/>
            <person name="Rusniok C."/>
            <person name="Buchrieser C."/>
            <person name="Chevalier F."/>
            <person name="Frangeul L."/>
            <person name="Msadek T."/>
            <person name="Zouine M."/>
            <person name="Couve E."/>
            <person name="Lalioui L."/>
            <person name="Poyart C."/>
            <person name="Trieu-Cuot P."/>
            <person name="Kunst F."/>
        </authorList>
    </citation>
    <scope>NUCLEOTIDE SEQUENCE [LARGE SCALE GENOMIC DNA]</scope>
    <source>
        <strain>NEM316</strain>
    </source>
</reference>
<sequence>MLKPLGDRVIISFVETEEKSVGGFVLAGASHDATKTAKVLAVGDGIRTLTGELVAPSVAEGDTVLVENGAGLEVKDGNEKVTVVRESDIVAVVK</sequence>
<protein>
    <recommendedName>
        <fullName evidence="1">Co-chaperonin GroES</fullName>
    </recommendedName>
    <alternativeName>
        <fullName evidence="1">10 kDa chaperonin</fullName>
    </alternativeName>
    <alternativeName>
        <fullName evidence="1">Chaperonin-10</fullName>
        <shortName evidence="1">Cpn10</shortName>
    </alternativeName>
</protein>
<keyword id="KW-0143">Chaperone</keyword>
<keyword id="KW-0963">Cytoplasm</keyword>
<comment type="function">
    <text evidence="1">Together with the chaperonin GroEL, plays an essential role in assisting protein folding. The GroEL-GroES system forms a nano-cage that allows encapsulation of the non-native substrate proteins and provides a physical environment optimized to promote and accelerate protein folding. GroES binds to the apical surface of the GroEL ring, thereby capping the opening of the GroEL channel.</text>
</comment>
<comment type="subunit">
    <text evidence="1">Heptamer of 7 subunits arranged in a ring. Interacts with the chaperonin GroEL.</text>
</comment>
<comment type="subcellular location">
    <subcellularLocation>
        <location evidence="1">Cytoplasm</location>
    </subcellularLocation>
</comment>
<comment type="similarity">
    <text evidence="1">Belongs to the GroES chaperonin family.</text>
</comment>
<accession>P63768</accession>
<accession>Q8CX21</accession>
<accession>Q8DWY6</accession>
<dbReference type="EMBL" id="AL766855">
    <property type="protein sequence ID" value="CAD47689.1"/>
    <property type="molecule type" value="Genomic_DNA"/>
</dbReference>
<dbReference type="RefSeq" id="WP_000917302.1">
    <property type="nucleotide sequence ID" value="NC_004368.1"/>
</dbReference>
<dbReference type="SMR" id="P63768"/>
<dbReference type="KEGG" id="san:groES"/>
<dbReference type="eggNOG" id="COG0234">
    <property type="taxonomic scope" value="Bacteria"/>
</dbReference>
<dbReference type="HOGENOM" id="CLU_132825_1_2_9"/>
<dbReference type="Proteomes" id="UP000000823">
    <property type="component" value="Chromosome"/>
</dbReference>
<dbReference type="GO" id="GO:0005737">
    <property type="term" value="C:cytoplasm"/>
    <property type="evidence" value="ECO:0007669"/>
    <property type="project" value="UniProtKB-SubCell"/>
</dbReference>
<dbReference type="GO" id="GO:0005524">
    <property type="term" value="F:ATP binding"/>
    <property type="evidence" value="ECO:0007669"/>
    <property type="project" value="InterPro"/>
</dbReference>
<dbReference type="GO" id="GO:0046872">
    <property type="term" value="F:metal ion binding"/>
    <property type="evidence" value="ECO:0007669"/>
    <property type="project" value="TreeGrafter"/>
</dbReference>
<dbReference type="GO" id="GO:0044183">
    <property type="term" value="F:protein folding chaperone"/>
    <property type="evidence" value="ECO:0007669"/>
    <property type="project" value="InterPro"/>
</dbReference>
<dbReference type="GO" id="GO:0051087">
    <property type="term" value="F:protein-folding chaperone binding"/>
    <property type="evidence" value="ECO:0007669"/>
    <property type="project" value="TreeGrafter"/>
</dbReference>
<dbReference type="GO" id="GO:0051082">
    <property type="term" value="F:unfolded protein binding"/>
    <property type="evidence" value="ECO:0007669"/>
    <property type="project" value="TreeGrafter"/>
</dbReference>
<dbReference type="GO" id="GO:0051085">
    <property type="term" value="P:chaperone cofactor-dependent protein refolding"/>
    <property type="evidence" value="ECO:0007669"/>
    <property type="project" value="TreeGrafter"/>
</dbReference>
<dbReference type="CDD" id="cd00320">
    <property type="entry name" value="cpn10"/>
    <property type="match status" value="1"/>
</dbReference>
<dbReference type="FunFam" id="2.30.33.40:FF:000001">
    <property type="entry name" value="10 kDa chaperonin"/>
    <property type="match status" value="1"/>
</dbReference>
<dbReference type="Gene3D" id="2.30.33.40">
    <property type="entry name" value="GroES chaperonin"/>
    <property type="match status" value="1"/>
</dbReference>
<dbReference type="HAMAP" id="MF_00580">
    <property type="entry name" value="CH10"/>
    <property type="match status" value="1"/>
</dbReference>
<dbReference type="InterPro" id="IPR020818">
    <property type="entry name" value="Chaperonin_GroES"/>
</dbReference>
<dbReference type="InterPro" id="IPR037124">
    <property type="entry name" value="Chaperonin_GroES_sf"/>
</dbReference>
<dbReference type="InterPro" id="IPR018369">
    <property type="entry name" value="Chaprnonin_Cpn10_CS"/>
</dbReference>
<dbReference type="InterPro" id="IPR011032">
    <property type="entry name" value="GroES-like_sf"/>
</dbReference>
<dbReference type="NCBIfam" id="NF001528">
    <property type="entry name" value="PRK00364.1-4"/>
    <property type="match status" value="1"/>
</dbReference>
<dbReference type="PANTHER" id="PTHR10772">
    <property type="entry name" value="10 KDA HEAT SHOCK PROTEIN"/>
    <property type="match status" value="1"/>
</dbReference>
<dbReference type="PANTHER" id="PTHR10772:SF58">
    <property type="entry name" value="CO-CHAPERONIN GROES"/>
    <property type="match status" value="1"/>
</dbReference>
<dbReference type="Pfam" id="PF00166">
    <property type="entry name" value="Cpn10"/>
    <property type="match status" value="1"/>
</dbReference>
<dbReference type="PRINTS" id="PR00297">
    <property type="entry name" value="CHAPERONIN10"/>
</dbReference>
<dbReference type="SMART" id="SM00883">
    <property type="entry name" value="Cpn10"/>
    <property type="match status" value="1"/>
</dbReference>
<dbReference type="SUPFAM" id="SSF50129">
    <property type="entry name" value="GroES-like"/>
    <property type="match status" value="1"/>
</dbReference>
<dbReference type="PROSITE" id="PS00681">
    <property type="entry name" value="CHAPERONINS_CPN10"/>
    <property type="match status" value="1"/>
</dbReference>
<gene>
    <name evidence="1" type="primary">groES</name>
    <name evidence="1" type="synonym">groS</name>
    <name type="ordered locus">gbs2030</name>
</gene>
<organism>
    <name type="scientific">Streptococcus agalactiae serotype III (strain NEM316)</name>
    <dbReference type="NCBI Taxonomy" id="211110"/>
    <lineage>
        <taxon>Bacteria</taxon>
        <taxon>Bacillati</taxon>
        <taxon>Bacillota</taxon>
        <taxon>Bacilli</taxon>
        <taxon>Lactobacillales</taxon>
        <taxon>Streptococcaceae</taxon>
        <taxon>Streptococcus</taxon>
    </lineage>
</organism>